<organism>
    <name type="scientific">Mus musculus</name>
    <name type="common">Mouse</name>
    <dbReference type="NCBI Taxonomy" id="10090"/>
    <lineage>
        <taxon>Eukaryota</taxon>
        <taxon>Metazoa</taxon>
        <taxon>Chordata</taxon>
        <taxon>Craniata</taxon>
        <taxon>Vertebrata</taxon>
        <taxon>Euteleostomi</taxon>
        <taxon>Mammalia</taxon>
        <taxon>Eutheria</taxon>
        <taxon>Euarchontoglires</taxon>
        <taxon>Glires</taxon>
        <taxon>Rodentia</taxon>
        <taxon>Myomorpha</taxon>
        <taxon>Muroidea</taxon>
        <taxon>Muridae</taxon>
        <taxon>Murinae</taxon>
        <taxon>Mus</taxon>
        <taxon>Mus</taxon>
    </lineage>
</organism>
<comment type="function">
    <text evidence="7 8">Plays a role in the process of sperm capacitation and acrosome reactions (PubMed:9322250, PubMed:9820206). Probable receptor for the putative fertilization-promoting peptide (FPP) at the sperm membrane that may modulate the activity of the adenylyl cyclase cAMP pathway (PubMed:9322250, PubMed:9820206).</text>
</comment>
<comment type="subunit">
    <text evidence="2 6">Found in a complex at least composed of MROH2B isoform 2, PRKACA isoform 2 and TCP11 (PubMed:27105888). Interacts with MROH2B isoform 2 (PubMed:27105888). Interacts with PRKACA isoform 2 (PubMed:27105888). Interacts with ODF1 (via leucine zipper motif) (By similarity).</text>
</comment>
<comment type="subcellular location">
    <subcellularLocation>
        <location evidence="9">Membrane</location>
        <topology evidence="9">Single-pass membrane protein</topology>
    </subcellularLocation>
    <subcellularLocation>
        <location evidence="6 7">Cell projection</location>
        <location evidence="6 7">Cilium</location>
        <location evidence="6 7">Flagellum</location>
    </subcellularLocation>
    <subcellularLocation>
        <location evidence="6 7">Cytoplasmic vesicle</location>
        <location evidence="6 7">Secretory vesicle</location>
        <location evidence="6 7">Acrosome</location>
    </subcellularLocation>
    <text evidence="6 7">Localizes on the acrosomal cap region of acrosome-intact, but not acrosome-reacted sperm (PubMed:9322250). Colocalizes with MROH2B and PRKACA on the acrosome and tail regions in round spermatids and spermatozoa regardless of the capacitation status of the sperm (PubMed:27105888).</text>
</comment>
<comment type="tissue specificity">
    <text evidence="5 7">Testis-specific (PubMed:1893875). Expressed in mature epididymal spermatozoa (at protein level) (PubMed:9322250).</text>
</comment>
<comment type="developmental stage">
    <text>First expressed in the pachytene spermatocyte stage (PubMed:1893875).</text>
</comment>
<comment type="PTM">
    <text evidence="6">Constitutively phosphorylated on serine, threonine and tyrosine residues within the head and tail regions of noncapacitated spermatozoa (PubMed:27105888). Phosphorylation on tyrosine residues increases upon sperm capacitation within the acrosomal region in a protein kinase A (PKA)-dependent signaling pathway (PubMed:27105888).</text>
</comment>
<comment type="similarity">
    <text evidence="9">Belongs to the TCP11 family.</text>
</comment>
<gene>
    <name type="primary">Tcp11</name>
    <name type="synonym">Tcp-11</name>
</gene>
<keyword id="KW-0966">Cell projection</keyword>
<keyword id="KW-0969">Cilium</keyword>
<keyword id="KW-0968">Cytoplasmic vesicle</keyword>
<keyword id="KW-0217">Developmental protein</keyword>
<keyword id="KW-0221">Differentiation</keyword>
<keyword id="KW-0282">Flagellum</keyword>
<keyword id="KW-0472">Membrane</keyword>
<keyword id="KW-0597">Phosphoprotein</keyword>
<keyword id="KW-1185">Reference proteome</keyword>
<keyword id="KW-0744">Spermatogenesis</keyword>
<keyword id="KW-0812">Transmembrane</keyword>
<keyword id="KW-1133">Transmembrane helix</keyword>
<evidence type="ECO:0000250" key="1">
    <source>
        <dbReference type="UniProtKB" id="Q5XI00"/>
    </source>
</evidence>
<evidence type="ECO:0000250" key="2">
    <source>
        <dbReference type="UniProtKB" id="Q8WWU5"/>
    </source>
</evidence>
<evidence type="ECO:0000255" key="3"/>
<evidence type="ECO:0000256" key="4">
    <source>
        <dbReference type="SAM" id="MobiDB-lite"/>
    </source>
</evidence>
<evidence type="ECO:0000269" key="5">
    <source>
    </source>
</evidence>
<evidence type="ECO:0000269" key="6">
    <source>
    </source>
</evidence>
<evidence type="ECO:0000269" key="7">
    <source>
    </source>
</evidence>
<evidence type="ECO:0000269" key="8">
    <source>
    </source>
</evidence>
<evidence type="ECO:0000305" key="9"/>
<reference key="1">
    <citation type="journal article" date="1991" name="Development">
        <title>Isolation and characterisation of a testis-expressed developmentally regulated gene from the distal inversion of the mouse T-complex.</title>
        <authorList>
            <person name="Mazarakis N.D."/>
            <person name="Nelki D."/>
            <person name="Lyon M.F."/>
            <person name="Evans E.P."/>
            <person name="Ruddy S."/>
            <person name="Freemont P."/>
            <person name="Dudley K."/>
        </authorList>
    </citation>
    <scope>NUCLEOTIDE SEQUENCE [MRNA]</scope>
    <scope>TISSUE SPECIFICITY</scope>
    <scope>DEVELOPMENTAL STAGE</scope>
    <source>
        <strain>CBA/CaJ</strain>
        <tissue>Testis</tissue>
    </source>
</reference>
<reference key="2">
    <citation type="journal article" date="1997" name="Mol. Reprod. Dev.">
        <title>TCP-11, the product of a mouse t-complex gene, plays a role in stimulation of capacitation and inhibition of the spontaneous acrosome reaction.</title>
        <authorList>
            <person name="Fraser L.R."/>
            <person name="Hosseini R."/>
            <person name="Hanyalogou A."/>
            <person name="Talmor A."/>
            <person name="Dudley R.K."/>
        </authorList>
    </citation>
    <scope>FUNCTION</scope>
    <scope>SUBCELLULAR LOCATION</scope>
    <scope>TISSUE SPECIFICITY</scope>
</reference>
<reference key="3">
    <citation type="journal article" date="1998" name="Mol. Reprod. Dev.">
        <title>FPP modulates mammalian sperm function via TCP-11 and the adenylyl cyclase/cAMP pathway.</title>
        <authorList>
            <person name="Adeoya-Osiguwa S.A."/>
            <person name="Dudley R.K."/>
            <person name="Hosseini R."/>
            <person name="Fraser L.R."/>
        </authorList>
    </citation>
    <scope>FUNCTION</scope>
</reference>
<reference key="4">
    <citation type="journal article" date="2010" name="Cell">
        <title>A tissue-specific atlas of mouse protein phosphorylation and expression.</title>
        <authorList>
            <person name="Huttlin E.L."/>
            <person name="Jedrychowski M.P."/>
            <person name="Elias J.E."/>
            <person name="Goswami T."/>
            <person name="Rad R."/>
            <person name="Beausoleil S.A."/>
            <person name="Villen J."/>
            <person name="Haas W."/>
            <person name="Sowa M.E."/>
            <person name="Gygi S.P."/>
        </authorList>
    </citation>
    <scope>IDENTIFICATION BY MASS SPECTROMETRY [LARGE SCALE ANALYSIS]</scope>
    <source>
        <tissue>Testis</tissue>
    </source>
</reference>
<reference key="5">
    <citation type="journal article" date="2016" name="FASEB J.">
        <title>A novel germ cell protein, SPIF (sperm PKA interacting factor), is essential for the formation of a PKA/TCP11 complex that undergoes conformational and phosphorylation changes upon capacitation.</title>
        <authorList>
            <person name="Stanger S.J."/>
            <person name="Law E.A."/>
            <person name="Jamsai D."/>
            <person name="O'Bryan M.K."/>
            <person name="Nixon B."/>
            <person name="McLaughlin E.A."/>
            <person name="Aitken R.J."/>
            <person name="Roman S.D."/>
        </authorList>
    </citation>
    <scope>IDENTIFICATION IN A COMPLEX WITH MROH2B AND PRKACA</scope>
    <scope>INTERACTION WITH MROH2B AND PRKACA</scope>
    <scope>SUBCELLULAR LOCATION</scope>
</reference>
<feature type="chain" id="PRO_0000065650" description="T-complex protein 11">
    <location>
        <begin position="1"/>
        <end position="566"/>
    </location>
</feature>
<feature type="transmembrane region" description="Helical" evidence="3">
    <location>
        <begin position="393"/>
        <end position="412"/>
    </location>
</feature>
<feature type="region of interest" description="Disordered" evidence="4">
    <location>
        <begin position="1"/>
        <end position="115"/>
    </location>
</feature>
<feature type="region of interest" description="Disordered" evidence="4">
    <location>
        <begin position="326"/>
        <end position="347"/>
    </location>
</feature>
<feature type="compositionally biased region" description="Basic and acidic residues" evidence="4">
    <location>
        <begin position="1"/>
        <end position="24"/>
    </location>
</feature>
<feature type="compositionally biased region" description="Polar residues" evidence="4">
    <location>
        <begin position="25"/>
        <end position="36"/>
    </location>
</feature>
<feature type="compositionally biased region" description="Low complexity" evidence="4">
    <location>
        <begin position="326"/>
        <end position="336"/>
    </location>
</feature>
<feature type="modified residue" description="Phosphoserine" evidence="1">
    <location>
        <position position="103"/>
    </location>
</feature>
<name>TCP11_MOUSE</name>
<accession>Q01755</accession>
<sequence length="566" mass="61970">MPDVKERAARKEPGAAESASRESRGGNTRESASSARGTDRVGSTVARARPPSPQGPRRGAVKTAPRGPVGHGGLRTGPTSRCPQPSARAKLPSVTRGAPLPPSPGKGHLGGTPSSHRLGMTERVHDASKLDCQLEERSLSSSSLKGKVKDTMPSDFWEHLNEQLSAVPPDFSCALELLKEIKEILLSLLLPRQSRLKNEIEEALDMEFLQQQADRGDLNVSYLSKYILNMMVLLCAPIRDEAVQRLENISDPVRLLRGIFQVLGQMKMDMVNYTIQSLQPQLQEHSVQFERAQFQERLNKEPRLLNHTTKWLTQAATQLIAPSASSSDLQDCSSSAGPSPSDVAVPEPLSPAMVLSQGFLNLLTWDPENEEFPETLVADRPRLQELESQQSQLTILASVLLVASSFSDSGLFSSPQFVDKLKQITKSLVEDFNSRPEEVMQSVSEQVVEEVHQGLESMGLAALSSENTASLVGQLQNIAKKENCVRSVIDQRIHLFLKCCFVLGVQRSLLDLPGGLTLIEAELAELGQKFVSLTHHNQQVFAPYYTEILKTLISPAQTLATKGGSL</sequence>
<proteinExistence type="evidence at protein level"/>
<protein>
    <recommendedName>
        <fullName>T-complex protein 11</fullName>
    </recommendedName>
    <alternativeName>
        <fullName>Testis-specific protein PBS13</fullName>
    </alternativeName>
</protein>
<dbReference type="EMBL" id="X52128">
    <property type="protein sequence ID" value="CAA36374.1"/>
    <property type="molecule type" value="mRNA"/>
</dbReference>
<dbReference type="PIR" id="S22933">
    <property type="entry name" value="S22933"/>
</dbReference>
<dbReference type="SMR" id="Q01755"/>
<dbReference type="FunCoup" id="Q01755">
    <property type="interactions" value="14"/>
</dbReference>
<dbReference type="STRING" id="10090.ENSMUSP00000038590"/>
<dbReference type="iPTMnet" id="Q01755"/>
<dbReference type="PhosphoSitePlus" id="Q01755"/>
<dbReference type="PaxDb" id="10090-ENSMUSP00000038590"/>
<dbReference type="ProteomicsDB" id="263263"/>
<dbReference type="AGR" id="MGI:98544"/>
<dbReference type="MGI" id="MGI:98544">
    <property type="gene designation" value="Tcp11"/>
</dbReference>
<dbReference type="eggNOG" id="KOG1981">
    <property type="taxonomic scope" value="Eukaryota"/>
</dbReference>
<dbReference type="InParanoid" id="Q01755"/>
<dbReference type="ChiTaRS" id="Tcp11">
    <property type="organism name" value="mouse"/>
</dbReference>
<dbReference type="PRO" id="PR:Q01755"/>
<dbReference type="Proteomes" id="UP000000589">
    <property type="component" value="Unplaced"/>
</dbReference>
<dbReference type="RNAct" id="Q01755">
    <property type="molecule type" value="protein"/>
</dbReference>
<dbReference type="GO" id="GO:0001669">
    <property type="term" value="C:acrosomal vesicle"/>
    <property type="evidence" value="ECO:0000314"/>
    <property type="project" value="UniProtKB"/>
</dbReference>
<dbReference type="GO" id="GO:0016020">
    <property type="term" value="C:membrane"/>
    <property type="evidence" value="ECO:0007669"/>
    <property type="project" value="UniProtKB-SubCell"/>
</dbReference>
<dbReference type="GO" id="GO:0036126">
    <property type="term" value="C:sperm flagellum"/>
    <property type="evidence" value="ECO:0000314"/>
    <property type="project" value="UniProtKB"/>
</dbReference>
<dbReference type="GO" id="GO:0097225">
    <property type="term" value="C:sperm midpiece"/>
    <property type="evidence" value="ECO:0000314"/>
    <property type="project" value="UniProtKB"/>
</dbReference>
<dbReference type="GO" id="GO:0007189">
    <property type="term" value="P:adenylate cyclase-activating G protein-coupled receptor signaling pathway"/>
    <property type="evidence" value="ECO:0000315"/>
    <property type="project" value="GO_Central"/>
</dbReference>
<dbReference type="GO" id="GO:0030154">
    <property type="term" value="P:cell differentiation"/>
    <property type="evidence" value="ECO:0007669"/>
    <property type="project" value="UniProtKB-KW"/>
</dbReference>
<dbReference type="GO" id="GO:0045920">
    <property type="term" value="P:negative regulation of exocytosis"/>
    <property type="evidence" value="ECO:0000315"/>
    <property type="project" value="UniProtKB"/>
</dbReference>
<dbReference type="GO" id="GO:0010737">
    <property type="term" value="P:protein kinase A signaling"/>
    <property type="evidence" value="ECO:0000314"/>
    <property type="project" value="UniProtKB"/>
</dbReference>
<dbReference type="GO" id="GO:1902490">
    <property type="term" value="P:regulation of sperm capacitation"/>
    <property type="evidence" value="ECO:0000315"/>
    <property type="project" value="UniProtKB"/>
</dbReference>
<dbReference type="GO" id="GO:0007283">
    <property type="term" value="P:spermatogenesis"/>
    <property type="evidence" value="ECO:0007669"/>
    <property type="project" value="UniProtKB-KW"/>
</dbReference>
<dbReference type="InterPro" id="IPR008862">
    <property type="entry name" value="Tcp11"/>
</dbReference>
<dbReference type="PANTHER" id="PTHR12832:SF14">
    <property type="entry name" value="T-COMPLEX PROTEIN 11 HOMOLOG"/>
    <property type="match status" value="1"/>
</dbReference>
<dbReference type="PANTHER" id="PTHR12832">
    <property type="entry name" value="TESTIS-SPECIFIC PROTEIN PBS13 T-COMPLEX 11"/>
    <property type="match status" value="1"/>
</dbReference>
<dbReference type="Pfam" id="PF05794">
    <property type="entry name" value="Tcp11"/>
    <property type="match status" value="1"/>
</dbReference>